<keyword id="KW-0975">Bacterial flagellum</keyword>
<keyword id="KW-0998">Cell outer membrane</keyword>
<keyword id="KW-0449">Lipoprotein</keyword>
<keyword id="KW-0472">Membrane</keyword>
<keyword id="KW-0564">Palmitate</keyword>
<keyword id="KW-0732">Signal</keyword>
<accession>Q8FXC2</accession>
<accession>G0KF00</accession>
<feature type="signal peptide" evidence="1">
    <location>
        <begin position="1"/>
        <end position="16"/>
    </location>
</feature>
<feature type="chain" id="PRO_0000009430" description="Flagellar L-ring protein">
    <location>
        <begin position="17"/>
        <end position="238"/>
    </location>
</feature>
<feature type="lipid moiety-binding region" description="N-palmitoyl cysteine" evidence="1">
    <location>
        <position position="17"/>
    </location>
</feature>
<feature type="lipid moiety-binding region" description="S-diacylglycerol cysteine" evidence="1">
    <location>
        <position position="17"/>
    </location>
</feature>
<sequence>MNKAILAVAMVLLLAGCATKPEEIGRAPDLSPVAAHLGMQNNPQFNGYPARPGKASYSLWDQRSTNFFKDPRAATPGDVLTVIISINDRANLDNKTDRERVSKGIYGGGGSFATSSITGAAAGGDMDASINTHSDSKSKGKGTIERSEDIRLQIAAIVTDTLPNGNLIIRGSQEVRVNNELRVLNVAGVVRPRDISGNNTISYDKIAEARISYGGRGRLSEIQQPPYGQQILDQFSPF</sequence>
<comment type="function">
    <text evidence="1">Assembles around the rod to form the L-ring and probably protects the motor/basal body from shearing forces during rotation.</text>
</comment>
<comment type="subunit">
    <text evidence="1">The basal body constitutes a major portion of the flagellar organelle and consists of four rings (L,P,S, and M) mounted on a central rod.</text>
</comment>
<comment type="subcellular location">
    <subcellularLocation>
        <location evidence="1">Cell outer membrane</location>
        <topology evidence="1">Lipid-anchor</topology>
    </subcellularLocation>
    <subcellularLocation>
        <location evidence="1">Bacterial flagellum basal body</location>
    </subcellularLocation>
</comment>
<comment type="similarity">
    <text evidence="1">Belongs to the FlgH family.</text>
</comment>
<comment type="caution">
    <text evidence="2">Brucella species display species-specific inactivation of flagellar genes and are consequently nonmotile.</text>
</comment>
<protein>
    <recommendedName>
        <fullName evidence="1">Flagellar L-ring protein</fullName>
    </recommendedName>
    <alternativeName>
        <fullName evidence="1">Basal body L-ring protein</fullName>
    </alternativeName>
</protein>
<organism>
    <name type="scientific">Brucella suis biovar 1 (strain 1330)</name>
    <dbReference type="NCBI Taxonomy" id="204722"/>
    <lineage>
        <taxon>Bacteria</taxon>
        <taxon>Pseudomonadati</taxon>
        <taxon>Pseudomonadota</taxon>
        <taxon>Alphaproteobacteria</taxon>
        <taxon>Hyphomicrobiales</taxon>
        <taxon>Brucellaceae</taxon>
        <taxon>Brucella/Ochrobactrum group</taxon>
        <taxon>Brucella</taxon>
    </lineage>
</organism>
<evidence type="ECO:0000255" key="1">
    <source>
        <dbReference type="HAMAP-Rule" id="MF_00415"/>
    </source>
</evidence>
<evidence type="ECO:0000305" key="2"/>
<dbReference type="EMBL" id="AE014292">
    <property type="protein sequence ID" value="AAN33365.1"/>
    <property type="molecule type" value="Genomic_DNA"/>
</dbReference>
<dbReference type="EMBL" id="CP002998">
    <property type="protein sequence ID" value="AEM19644.1"/>
    <property type="molecule type" value="Genomic_DNA"/>
</dbReference>
<dbReference type="RefSeq" id="WP_004690008.1">
    <property type="nucleotide sequence ID" value="NZ_KN046805.1"/>
</dbReference>
<dbReference type="SMR" id="Q8FXC2"/>
<dbReference type="GeneID" id="55591882"/>
<dbReference type="KEGG" id="bms:BRA0158"/>
<dbReference type="KEGG" id="bsi:BS1330_II0157"/>
<dbReference type="PATRIC" id="fig|204722.21.peg.3354"/>
<dbReference type="HOGENOM" id="CLU_069313_1_2_5"/>
<dbReference type="PhylomeDB" id="Q8FXC2"/>
<dbReference type="Proteomes" id="UP000007104">
    <property type="component" value="Chromosome II"/>
</dbReference>
<dbReference type="GO" id="GO:0009427">
    <property type="term" value="C:bacterial-type flagellum basal body, distal rod, L ring"/>
    <property type="evidence" value="ECO:0007669"/>
    <property type="project" value="InterPro"/>
</dbReference>
<dbReference type="GO" id="GO:0009279">
    <property type="term" value="C:cell outer membrane"/>
    <property type="evidence" value="ECO:0007669"/>
    <property type="project" value="UniProtKB-SubCell"/>
</dbReference>
<dbReference type="GO" id="GO:0003774">
    <property type="term" value="F:cytoskeletal motor activity"/>
    <property type="evidence" value="ECO:0007669"/>
    <property type="project" value="InterPro"/>
</dbReference>
<dbReference type="GO" id="GO:0071973">
    <property type="term" value="P:bacterial-type flagellum-dependent cell motility"/>
    <property type="evidence" value="ECO:0007669"/>
    <property type="project" value="InterPro"/>
</dbReference>
<dbReference type="HAMAP" id="MF_00415">
    <property type="entry name" value="FlgH"/>
    <property type="match status" value="1"/>
</dbReference>
<dbReference type="InterPro" id="IPR000527">
    <property type="entry name" value="Flag_Lring"/>
</dbReference>
<dbReference type="NCBIfam" id="NF001305">
    <property type="entry name" value="PRK00249.1-5"/>
    <property type="match status" value="1"/>
</dbReference>
<dbReference type="PANTHER" id="PTHR34933">
    <property type="entry name" value="FLAGELLAR L-RING PROTEIN"/>
    <property type="match status" value="1"/>
</dbReference>
<dbReference type="PANTHER" id="PTHR34933:SF1">
    <property type="entry name" value="FLAGELLAR L-RING PROTEIN"/>
    <property type="match status" value="1"/>
</dbReference>
<dbReference type="Pfam" id="PF02107">
    <property type="entry name" value="FlgH"/>
    <property type="match status" value="1"/>
</dbReference>
<dbReference type="PRINTS" id="PR01008">
    <property type="entry name" value="FLGLRINGFLGH"/>
</dbReference>
<dbReference type="PROSITE" id="PS51257">
    <property type="entry name" value="PROKAR_LIPOPROTEIN"/>
    <property type="match status" value="1"/>
</dbReference>
<reference key="1">
    <citation type="journal article" date="2002" name="Proc. Natl. Acad. Sci. U.S.A.">
        <title>The Brucella suis genome reveals fundamental similarities between animal and plant pathogens and symbionts.</title>
        <authorList>
            <person name="Paulsen I.T."/>
            <person name="Seshadri R."/>
            <person name="Nelson K.E."/>
            <person name="Eisen J.A."/>
            <person name="Heidelberg J.F."/>
            <person name="Read T.D."/>
            <person name="Dodson R.J."/>
            <person name="Umayam L.A."/>
            <person name="Brinkac L.M."/>
            <person name="Beanan M.J."/>
            <person name="Daugherty S.C."/>
            <person name="DeBoy R.T."/>
            <person name="Durkin A.S."/>
            <person name="Kolonay J.F."/>
            <person name="Madupu R."/>
            <person name="Nelson W.C."/>
            <person name="Ayodeji B."/>
            <person name="Kraul M."/>
            <person name="Shetty J."/>
            <person name="Malek J.A."/>
            <person name="Van Aken S.E."/>
            <person name="Riedmuller S."/>
            <person name="Tettelin H."/>
            <person name="Gill S.R."/>
            <person name="White O."/>
            <person name="Salzberg S.L."/>
            <person name="Hoover D.L."/>
            <person name="Lindler L.E."/>
            <person name="Halling S.M."/>
            <person name="Boyle S.M."/>
            <person name="Fraser C.M."/>
        </authorList>
    </citation>
    <scope>NUCLEOTIDE SEQUENCE [LARGE SCALE GENOMIC DNA]</scope>
    <source>
        <strain>1330</strain>
    </source>
</reference>
<reference key="2">
    <citation type="journal article" date="2011" name="J. Bacteriol.">
        <title>Revised genome sequence of Brucella suis 1330.</title>
        <authorList>
            <person name="Tae H."/>
            <person name="Shallom S."/>
            <person name="Settlage R."/>
            <person name="Preston D."/>
            <person name="Adams L.G."/>
            <person name="Garner H.R."/>
        </authorList>
    </citation>
    <scope>NUCLEOTIDE SEQUENCE [LARGE SCALE GENOMIC DNA]</scope>
    <source>
        <strain>1330</strain>
    </source>
</reference>
<proteinExistence type="inferred from homology"/>
<gene>
    <name evidence="1" type="primary">flgH</name>
    <name type="ordered locus">BRA0158</name>
    <name type="ordered locus">BS1330_II0157</name>
</gene>
<name>FLGH_BRUSU</name>